<proteinExistence type="evidence at transcript level"/>
<dbReference type="EMBL" id="DQ105587">
    <property type="protein sequence ID" value="AAZ15015.1"/>
    <property type="molecule type" value="mRNA"/>
</dbReference>
<dbReference type="EMBL" id="AC000106">
    <property type="protein sequence ID" value="AAB70414.1"/>
    <property type="status" value="ALT_SEQ"/>
    <property type="molecule type" value="Genomic_DNA"/>
</dbReference>
<dbReference type="EMBL" id="CP002684">
    <property type="protein sequence ID" value="AEE28363.1"/>
    <property type="molecule type" value="Genomic_DNA"/>
</dbReference>
<dbReference type="EMBL" id="CP002684">
    <property type="protein sequence ID" value="AEE28364.1"/>
    <property type="molecule type" value="Genomic_DNA"/>
</dbReference>
<dbReference type="EMBL" id="AF386931">
    <property type="protein sequence ID" value="AAK62376.1"/>
    <property type="molecule type" value="mRNA"/>
</dbReference>
<dbReference type="EMBL" id="AY072458">
    <property type="protein sequence ID" value="AAL66873.1"/>
    <property type="molecule type" value="mRNA"/>
</dbReference>
<dbReference type="EMBL" id="AJ249969">
    <property type="protein sequence ID" value="CAB64734.1"/>
    <property type="molecule type" value="mRNA"/>
</dbReference>
<dbReference type="PIR" id="G86220">
    <property type="entry name" value="G86220"/>
</dbReference>
<dbReference type="RefSeq" id="NP_001077495.1">
    <molecule id="Q4F7G0-1"/>
    <property type="nucleotide sequence ID" value="NM_001084026.2"/>
</dbReference>
<dbReference type="RefSeq" id="NP_563828.2">
    <molecule id="Q4F7G0-1"/>
    <property type="nucleotide sequence ID" value="NM_100762.2"/>
</dbReference>
<dbReference type="SMR" id="Q4F7G0"/>
<dbReference type="FunCoup" id="Q4F7G0">
    <property type="interactions" value="733"/>
</dbReference>
<dbReference type="STRING" id="3702.Q4F7G0"/>
<dbReference type="PaxDb" id="3702-AT1G08900.2"/>
<dbReference type="EnsemblPlants" id="AT1G08900.1">
    <molecule id="Q4F7G0-1"/>
    <property type="protein sequence ID" value="AT1G08900.1"/>
    <property type="gene ID" value="AT1G08900"/>
</dbReference>
<dbReference type="EnsemblPlants" id="AT1G08900.2">
    <molecule id="Q4F7G0-1"/>
    <property type="protein sequence ID" value="AT1G08900.2"/>
    <property type="gene ID" value="AT1G08900"/>
</dbReference>
<dbReference type="GeneID" id="837411"/>
<dbReference type="Gramene" id="AT1G08900.1">
    <molecule id="Q4F7G0-1"/>
    <property type="protein sequence ID" value="AT1G08900.1"/>
    <property type="gene ID" value="AT1G08900"/>
</dbReference>
<dbReference type="Gramene" id="AT1G08900.2">
    <molecule id="Q4F7G0-1"/>
    <property type="protein sequence ID" value="AT1G08900.2"/>
    <property type="gene ID" value="AT1G08900"/>
</dbReference>
<dbReference type="KEGG" id="ath:AT1G08900"/>
<dbReference type="Araport" id="AT1G08900"/>
<dbReference type="TAIR" id="AT1G08900"/>
<dbReference type="eggNOG" id="KOG0254">
    <property type="taxonomic scope" value="Eukaryota"/>
</dbReference>
<dbReference type="HOGENOM" id="CLU_001265_30_5_1"/>
<dbReference type="InParanoid" id="Q4F7G0"/>
<dbReference type="OMA" id="LFHMRNA"/>
<dbReference type="OrthoDB" id="6612291at2759"/>
<dbReference type="PhylomeDB" id="Q4F7G0"/>
<dbReference type="PRO" id="PR:Q4F7G0"/>
<dbReference type="Proteomes" id="UP000006548">
    <property type="component" value="Chromosome 1"/>
</dbReference>
<dbReference type="ExpressionAtlas" id="Q4F7G0">
    <property type="expression patterns" value="baseline and differential"/>
</dbReference>
<dbReference type="GO" id="GO:0016020">
    <property type="term" value="C:membrane"/>
    <property type="evidence" value="ECO:0007669"/>
    <property type="project" value="UniProtKB-SubCell"/>
</dbReference>
<dbReference type="GO" id="GO:0051119">
    <property type="term" value="F:sugar transmembrane transporter activity"/>
    <property type="evidence" value="ECO:0007669"/>
    <property type="project" value="InterPro"/>
</dbReference>
<dbReference type="CDD" id="cd17358">
    <property type="entry name" value="MFS_GLUT6_8_Class3_like"/>
    <property type="match status" value="1"/>
</dbReference>
<dbReference type="FunFam" id="1.20.1250.20:FF:000043">
    <property type="entry name" value="sugar transporter ERD6-like 6"/>
    <property type="match status" value="1"/>
</dbReference>
<dbReference type="Gene3D" id="1.20.1250.20">
    <property type="entry name" value="MFS general substrate transporter like domains"/>
    <property type="match status" value="1"/>
</dbReference>
<dbReference type="InterPro" id="IPR020846">
    <property type="entry name" value="MFS_dom"/>
</dbReference>
<dbReference type="InterPro" id="IPR044775">
    <property type="entry name" value="MFS_ERD6/Tret1-like"/>
</dbReference>
<dbReference type="InterPro" id="IPR005828">
    <property type="entry name" value="MFS_sugar_transport-like"/>
</dbReference>
<dbReference type="InterPro" id="IPR036259">
    <property type="entry name" value="MFS_trans_sf"/>
</dbReference>
<dbReference type="InterPro" id="IPR050549">
    <property type="entry name" value="MFS_Trehalose_Transporter"/>
</dbReference>
<dbReference type="InterPro" id="IPR003663">
    <property type="entry name" value="Sugar/inositol_transpt"/>
</dbReference>
<dbReference type="InterPro" id="IPR005829">
    <property type="entry name" value="Sugar_transporter_CS"/>
</dbReference>
<dbReference type="NCBIfam" id="TIGR00879">
    <property type="entry name" value="SP"/>
    <property type="match status" value="1"/>
</dbReference>
<dbReference type="PANTHER" id="PTHR48021">
    <property type="match status" value="1"/>
</dbReference>
<dbReference type="PANTHER" id="PTHR48021:SF93">
    <property type="entry name" value="SUGAR TRANSPORTER ERD6-LIKE 1-RELATED"/>
    <property type="match status" value="1"/>
</dbReference>
<dbReference type="Pfam" id="PF00083">
    <property type="entry name" value="Sugar_tr"/>
    <property type="match status" value="1"/>
</dbReference>
<dbReference type="PRINTS" id="PR00171">
    <property type="entry name" value="SUGRTRNSPORT"/>
</dbReference>
<dbReference type="SUPFAM" id="SSF103473">
    <property type="entry name" value="MFS general substrate transporter"/>
    <property type="match status" value="1"/>
</dbReference>
<dbReference type="PROSITE" id="PS50850">
    <property type="entry name" value="MFS"/>
    <property type="match status" value="1"/>
</dbReference>
<dbReference type="PROSITE" id="PS00216">
    <property type="entry name" value="SUGAR_TRANSPORT_1"/>
    <property type="match status" value="1"/>
</dbReference>
<dbReference type="PROSITE" id="PS00217">
    <property type="entry name" value="SUGAR_TRANSPORT_2"/>
    <property type="match status" value="1"/>
</dbReference>
<comment type="function">
    <text evidence="4">Sugar transporter.</text>
</comment>
<comment type="subcellular location">
    <subcellularLocation>
        <location evidence="1">Membrane</location>
        <topology evidence="1">Multi-pass membrane protein</topology>
    </subcellularLocation>
</comment>
<comment type="alternative products">
    <event type="alternative splicing"/>
    <isoform>
        <id>Q4F7G0-1</id>
        <name>1</name>
        <sequence type="displayed"/>
    </isoform>
    <isoform>
        <id>Q4F7G0-2</id>
        <name>2</name>
        <sequence type="described" ref="VSP_021543 VSP_021544"/>
    </isoform>
</comment>
<comment type="similarity">
    <text evidence="4">Belongs to the major facilitator superfamily. Sugar transporter (TC 2.A.1.1) family.</text>
</comment>
<comment type="sequence caution" evidence="4">
    <conflict type="erroneous gene model prediction">
        <sequence resource="EMBL-CDS" id="AAB70414"/>
    </conflict>
</comment>
<feature type="chain" id="PRO_0000259851" description="Sugar transporter ERD6-like 2">
    <location>
        <begin position="1"/>
        <end position="462"/>
    </location>
</feature>
<feature type="transmembrane region" description="Helical; Name=1" evidence="2">
    <location>
        <begin position="23"/>
        <end position="43"/>
    </location>
</feature>
<feature type="transmembrane region" description="Helical; Name=2" evidence="2">
    <location>
        <begin position="70"/>
        <end position="90"/>
    </location>
</feature>
<feature type="transmembrane region" description="Helical; Name=3" evidence="2">
    <location>
        <begin position="96"/>
        <end position="116"/>
    </location>
</feature>
<feature type="transmembrane region" description="Helical; Name=4" evidence="2">
    <location>
        <begin position="123"/>
        <end position="143"/>
    </location>
</feature>
<feature type="transmembrane region" description="Helical; Name=5" evidence="2">
    <location>
        <begin position="156"/>
        <end position="176"/>
    </location>
</feature>
<feature type="transmembrane region" description="Helical; Name=6" evidence="2">
    <location>
        <begin position="178"/>
        <end position="198"/>
    </location>
</feature>
<feature type="transmembrane region" description="Helical; Name=7" evidence="2">
    <location>
        <begin position="261"/>
        <end position="281"/>
    </location>
</feature>
<feature type="transmembrane region" description="Helical; Name=8" evidence="2">
    <location>
        <begin position="296"/>
        <end position="316"/>
    </location>
</feature>
<feature type="transmembrane region" description="Helical; Name=9" evidence="2">
    <location>
        <begin position="324"/>
        <end position="344"/>
    </location>
</feature>
<feature type="transmembrane region" description="Helical; Name=10" evidence="2">
    <location>
        <begin position="357"/>
        <end position="377"/>
    </location>
</feature>
<feature type="transmembrane region" description="Helical; Name=11" evidence="2">
    <location>
        <begin position="397"/>
        <end position="417"/>
    </location>
</feature>
<feature type="transmembrane region" description="Helical; Name=12" evidence="2">
    <location>
        <begin position="423"/>
        <end position="443"/>
    </location>
</feature>
<feature type="splice variant" id="VSP_021543" description="In isoform 2." evidence="3">
    <original>IG</original>
    <variation>FR</variation>
    <location>
        <begin position="263"/>
        <end position="264"/>
    </location>
</feature>
<feature type="splice variant" id="VSP_021544" description="In isoform 2." evidence="3">
    <location>
        <begin position="265"/>
        <end position="462"/>
    </location>
</feature>
<sequence length="462" mass="51053">MESERLESHLLNKQEEEASSFTSGLLLSTSVVVAGSFCYGCAMSYSSPAQSKIMEELGLSVADYSFFTSVMTLGGMITAVFSGKISALVGRRQTMWISDVCCIFGWLAVAFAHDIIMLNTGRLFLGFGVGLISYVVPVYIAEITPKTFRGGFSYSNQLLQCLGISLMFFTGNFFHWRTLALLSAIPSAFQVICLFFIPESPRWLAMYGQDQELEVSLKKLRGENSDILKEAAEIRETVEISRKESQSGIRDLFHIGNAHSLIIGLGLMLLQQFCGSAAISAYAARIFDKAGFPSDIGTTILAVILIPQSIVVMLTVDRWGRRPLLMISSIGMCICSFFIGLSYYLQKNGEFQKLCSVMLIVGLVGYVSSFGIGLGGLPWVIMSEIFPVNVKITAGSLVTMSNWFFNWIIIYSFNFMIQWSASGTYFIFSGVSLVTIVFIWTLVPETKGRTLEEIQTSLVRLS</sequence>
<organism>
    <name type="scientific">Arabidopsis thaliana</name>
    <name type="common">Mouse-ear cress</name>
    <dbReference type="NCBI Taxonomy" id="3702"/>
    <lineage>
        <taxon>Eukaryota</taxon>
        <taxon>Viridiplantae</taxon>
        <taxon>Streptophyta</taxon>
        <taxon>Embryophyta</taxon>
        <taxon>Tracheophyta</taxon>
        <taxon>Spermatophyta</taxon>
        <taxon>Magnoliopsida</taxon>
        <taxon>eudicotyledons</taxon>
        <taxon>Gunneridae</taxon>
        <taxon>Pentapetalae</taxon>
        <taxon>rosids</taxon>
        <taxon>malvids</taxon>
        <taxon>Brassicales</taxon>
        <taxon>Brassicaceae</taxon>
        <taxon>Camelineae</taxon>
        <taxon>Arabidopsis</taxon>
    </lineage>
</organism>
<protein>
    <recommendedName>
        <fullName>Sugar transporter ERD6-like 2</fullName>
    </recommendedName>
    <alternativeName>
        <fullName>Sugar transporter-like protein 3</fullName>
    </alternativeName>
</protein>
<evidence type="ECO:0000250" key="1"/>
<evidence type="ECO:0000255" key="2"/>
<evidence type="ECO:0000303" key="3">
    <source>
    </source>
</evidence>
<evidence type="ECO:0000305" key="4"/>
<reference key="1">
    <citation type="submission" date="2005-06" db="EMBL/GenBank/DDBJ databases">
        <title>Functional analysis of sugar transporters in the model plant Arabidopsis thaliana.</title>
        <authorList>
            <person name="Reinders A."/>
            <person name="Ward J.M."/>
        </authorList>
    </citation>
    <scope>NUCLEOTIDE SEQUENCE [MRNA] (ISOFORM 1)</scope>
    <source>
        <strain>cv. Columbia</strain>
    </source>
</reference>
<reference key="2">
    <citation type="journal article" date="2000" name="Nature">
        <title>Sequence and analysis of chromosome 1 of the plant Arabidopsis thaliana.</title>
        <authorList>
            <person name="Theologis A."/>
            <person name="Ecker J.R."/>
            <person name="Palm C.J."/>
            <person name="Federspiel N.A."/>
            <person name="Kaul S."/>
            <person name="White O."/>
            <person name="Alonso J."/>
            <person name="Altafi H."/>
            <person name="Araujo R."/>
            <person name="Bowman C.L."/>
            <person name="Brooks S.Y."/>
            <person name="Buehler E."/>
            <person name="Chan A."/>
            <person name="Chao Q."/>
            <person name="Chen H."/>
            <person name="Cheuk R.F."/>
            <person name="Chin C.W."/>
            <person name="Chung M.K."/>
            <person name="Conn L."/>
            <person name="Conway A.B."/>
            <person name="Conway A.R."/>
            <person name="Creasy T.H."/>
            <person name="Dewar K."/>
            <person name="Dunn P."/>
            <person name="Etgu P."/>
            <person name="Feldblyum T.V."/>
            <person name="Feng J.-D."/>
            <person name="Fong B."/>
            <person name="Fujii C.Y."/>
            <person name="Gill J.E."/>
            <person name="Goldsmith A.D."/>
            <person name="Haas B."/>
            <person name="Hansen N.F."/>
            <person name="Hughes B."/>
            <person name="Huizar L."/>
            <person name="Hunter J.L."/>
            <person name="Jenkins J."/>
            <person name="Johnson-Hopson C."/>
            <person name="Khan S."/>
            <person name="Khaykin E."/>
            <person name="Kim C.J."/>
            <person name="Koo H.L."/>
            <person name="Kremenetskaia I."/>
            <person name="Kurtz D.B."/>
            <person name="Kwan A."/>
            <person name="Lam B."/>
            <person name="Langin-Hooper S."/>
            <person name="Lee A."/>
            <person name="Lee J.M."/>
            <person name="Lenz C.A."/>
            <person name="Li J.H."/>
            <person name="Li Y.-P."/>
            <person name="Lin X."/>
            <person name="Liu S.X."/>
            <person name="Liu Z.A."/>
            <person name="Luros J.S."/>
            <person name="Maiti R."/>
            <person name="Marziali A."/>
            <person name="Militscher J."/>
            <person name="Miranda M."/>
            <person name="Nguyen M."/>
            <person name="Nierman W.C."/>
            <person name="Osborne B.I."/>
            <person name="Pai G."/>
            <person name="Peterson J."/>
            <person name="Pham P.K."/>
            <person name="Rizzo M."/>
            <person name="Rooney T."/>
            <person name="Rowley D."/>
            <person name="Sakano H."/>
            <person name="Salzberg S.L."/>
            <person name="Schwartz J.R."/>
            <person name="Shinn P."/>
            <person name="Southwick A.M."/>
            <person name="Sun H."/>
            <person name="Tallon L.J."/>
            <person name="Tambunga G."/>
            <person name="Toriumi M.J."/>
            <person name="Town C.D."/>
            <person name="Utterback T."/>
            <person name="Van Aken S."/>
            <person name="Vaysberg M."/>
            <person name="Vysotskaia V.S."/>
            <person name="Walker M."/>
            <person name="Wu D."/>
            <person name="Yu G."/>
            <person name="Fraser C.M."/>
            <person name="Venter J.C."/>
            <person name="Davis R.W."/>
        </authorList>
    </citation>
    <scope>NUCLEOTIDE SEQUENCE [LARGE SCALE GENOMIC DNA]</scope>
    <source>
        <strain>cv. Columbia</strain>
    </source>
</reference>
<reference key="3">
    <citation type="journal article" date="2017" name="Plant J.">
        <title>Araport11: a complete reannotation of the Arabidopsis thaliana reference genome.</title>
        <authorList>
            <person name="Cheng C.Y."/>
            <person name="Krishnakumar V."/>
            <person name="Chan A.P."/>
            <person name="Thibaud-Nissen F."/>
            <person name="Schobel S."/>
            <person name="Town C.D."/>
        </authorList>
    </citation>
    <scope>GENOME REANNOTATION</scope>
    <source>
        <strain>cv. Columbia</strain>
    </source>
</reference>
<reference key="4">
    <citation type="journal article" date="2003" name="Science">
        <title>Empirical analysis of transcriptional activity in the Arabidopsis genome.</title>
        <authorList>
            <person name="Yamada K."/>
            <person name="Lim J."/>
            <person name="Dale J.M."/>
            <person name="Chen H."/>
            <person name="Shinn P."/>
            <person name="Palm C.J."/>
            <person name="Southwick A.M."/>
            <person name="Wu H.C."/>
            <person name="Kim C.J."/>
            <person name="Nguyen M."/>
            <person name="Pham P.K."/>
            <person name="Cheuk R.F."/>
            <person name="Karlin-Newmann G."/>
            <person name="Liu S.X."/>
            <person name="Lam B."/>
            <person name="Sakano H."/>
            <person name="Wu T."/>
            <person name="Yu G."/>
            <person name="Miranda M."/>
            <person name="Quach H.L."/>
            <person name="Tripp M."/>
            <person name="Chang C.H."/>
            <person name="Lee J.M."/>
            <person name="Toriumi M.J."/>
            <person name="Chan M.M."/>
            <person name="Tang C.C."/>
            <person name="Onodera C.S."/>
            <person name="Deng J.M."/>
            <person name="Akiyama K."/>
            <person name="Ansari Y."/>
            <person name="Arakawa T."/>
            <person name="Banh J."/>
            <person name="Banno F."/>
            <person name="Bowser L."/>
            <person name="Brooks S.Y."/>
            <person name="Carninci P."/>
            <person name="Chao Q."/>
            <person name="Choy N."/>
            <person name="Enju A."/>
            <person name="Goldsmith A.D."/>
            <person name="Gurjal M."/>
            <person name="Hansen N.F."/>
            <person name="Hayashizaki Y."/>
            <person name="Johnson-Hopson C."/>
            <person name="Hsuan V.W."/>
            <person name="Iida K."/>
            <person name="Karnes M."/>
            <person name="Khan S."/>
            <person name="Koesema E."/>
            <person name="Ishida J."/>
            <person name="Jiang P.X."/>
            <person name="Jones T."/>
            <person name="Kawai J."/>
            <person name="Kamiya A."/>
            <person name="Meyers C."/>
            <person name="Nakajima M."/>
            <person name="Narusaka M."/>
            <person name="Seki M."/>
            <person name="Sakurai T."/>
            <person name="Satou M."/>
            <person name="Tamse R."/>
            <person name="Vaysberg M."/>
            <person name="Wallender E.K."/>
            <person name="Wong C."/>
            <person name="Yamamura Y."/>
            <person name="Yuan S."/>
            <person name="Shinozaki K."/>
            <person name="Davis R.W."/>
            <person name="Theologis A."/>
            <person name="Ecker J.R."/>
        </authorList>
    </citation>
    <scope>NUCLEOTIDE SEQUENCE [LARGE SCALE MRNA] (ISOFORM 2)</scope>
    <source>
        <strain>cv. Columbia</strain>
    </source>
</reference>
<reference key="5">
    <citation type="submission" date="1999-10" db="EMBL/GenBank/DDBJ databases">
        <title>A novel multigene family in Arabidopsis thaliana coding for putative sugar transporters.</title>
        <authorList>
            <person name="Gy I."/>
            <person name="Kreis M."/>
            <person name="Lecharny A."/>
        </authorList>
    </citation>
    <scope>NUCLEOTIDE SEQUENCE [MRNA] OF 46-298</scope>
</reference>
<reference key="6">
    <citation type="journal article" date="2006" name="BMC Evol. Biol.">
        <title>The monosaccharide transporter gene family in land plants is ancient and shows differential subfamily expression and expansion across lineages.</title>
        <authorList>
            <person name="Johnson D.A."/>
            <person name="Hill J.P."/>
            <person name="Thomas M.A."/>
        </authorList>
    </citation>
    <scope>GENE FAMILY</scope>
</reference>
<keyword id="KW-0025">Alternative splicing</keyword>
<keyword id="KW-0472">Membrane</keyword>
<keyword id="KW-1185">Reference proteome</keyword>
<keyword id="KW-0762">Sugar transport</keyword>
<keyword id="KW-0812">Transmembrane</keyword>
<keyword id="KW-1133">Transmembrane helix</keyword>
<keyword id="KW-0813">Transport</keyword>
<gene>
    <name type="primary">SUGTL3</name>
    <name type="ordered locus">At1g08900</name>
    <name type="ORF">F7G19.22</name>
</gene>
<name>ERDL2_ARATH</name>
<accession>Q4F7G0</accession>
<accession>O04040</accession>
<accession>Q94F32</accession>
<accession>Q9SCW8</accession>